<accession>Q81LR4</accession>
<accession>Q6HT69</accession>
<accession>Q6KMF9</accession>
<keyword id="KW-1185">Reference proteome</keyword>
<keyword id="KW-0687">Ribonucleoprotein</keyword>
<keyword id="KW-0689">Ribosomal protein</keyword>
<keyword id="KW-0694">RNA-binding</keyword>
<keyword id="KW-0699">rRNA-binding</keyword>
<organism>
    <name type="scientific">Bacillus anthracis</name>
    <dbReference type="NCBI Taxonomy" id="1392"/>
    <lineage>
        <taxon>Bacteria</taxon>
        <taxon>Bacillati</taxon>
        <taxon>Bacillota</taxon>
        <taxon>Bacilli</taxon>
        <taxon>Bacillales</taxon>
        <taxon>Bacillaceae</taxon>
        <taxon>Bacillus</taxon>
        <taxon>Bacillus cereus group</taxon>
    </lineage>
</organism>
<name>RS20_BACAN</name>
<feature type="chain" id="PRO_0000167910" description="Small ribosomal subunit protein bS20">
    <location>
        <begin position="1"/>
        <end position="85"/>
    </location>
</feature>
<feature type="region of interest" description="Disordered" evidence="2">
    <location>
        <begin position="1"/>
        <end position="25"/>
    </location>
</feature>
<proteinExistence type="inferred from homology"/>
<gene>
    <name evidence="1" type="primary">rpsT</name>
    <name type="ordered locus">BA_4547</name>
    <name type="ordered locus">GBAA_4547</name>
    <name type="ordered locus">BAS4221</name>
</gene>
<evidence type="ECO:0000255" key="1">
    <source>
        <dbReference type="HAMAP-Rule" id="MF_00500"/>
    </source>
</evidence>
<evidence type="ECO:0000256" key="2">
    <source>
        <dbReference type="SAM" id="MobiDB-lite"/>
    </source>
</evidence>
<evidence type="ECO:0000305" key="3"/>
<comment type="function">
    <text evidence="1">Binds directly to 16S ribosomal RNA.</text>
</comment>
<comment type="similarity">
    <text evidence="1">Belongs to the bacterial ribosomal protein bS20 family.</text>
</comment>
<comment type="sequence caution" evidence="3">
    <conflict type="erroneous initiation">
        <sequence resource="EMBL-CDS" id="AAP28256"/>
    </conflict>
</comment>
<comment type="sequence caution" evidence="3">
    <conflict type="erroneous initiation">
        <sequence resource="EMBL-CDS" id="AAT33668"/>
    </conflict>
</comment>
<comment type="sequence caution" evidence="3">
    <conflict type="erroneous initiation">
        <sequence resource="EMBL-CDS" id="AAT56520"/>
    </conflict>
</comment>
<reference key="1">
    <citation type="journal article" date="2003" name="Nature">
        <title>The genome sequence of Bacillus anthracis Ames and comparison to closely related bacteria.</title>
        <authorList>
            <person name="Read T.D."/>
            <person name="Peterson S.N."/>
            <person name="Tourasse N.J."/>
            <person name="Baillie L.W."/>
            <person name="Paulsen I.T."/>
            <person name="Nelson K.E."/>
            <person name="Tettelin H."/>
            <person name="Fouts D.E."/>
            <person name="Eisen J.A."/>
            <person name="Gill S.R."/>
            <person name="Holtzapple E.K."/>
            <person name="Okstad O.A."/>
            <person name="Helgason E."/>
            <person name="Rilstone J."/>
            <person name="Wu M."/>
            <person name="Kolonay J.F."/>
            <person name="Beanan M.J."/>
            <person name="Dodson R.J."/>
            <person name="Brinkac L.M."/>
            <person name="Gwinn M.L."/>
            <person name="DeBoy R.T."/>
            <person name="Madpu R."/>
            <person name="Daugherty S.C."/>
            <person name="Durkin A.S."/>
            <person name="Haft D.H."/>
            <person name="Nelson W.C."/>
            <person name="Peterson J.D."/>
            <person name="Pop M."/>
            <person name="Khouri H.M."/>
            <person name="Radune D."/>
            <person name="Benton J.L."/>
            <person name="Mahamoud Y."/>
            <person name="Jiang L."/>
            <person name="Hance I.R."/>
            <person name="Weidman J.F."/>
            <person name="Berry K.J."/>
            <person name="Plaut R.D."/>
            <person name="Wolf A.M."/>
            <person name="Watkins K.L."/>
            <person name="Nierman W.C."/>
            <person name="Hazen A."/>
            <person name="Cline R.T."/>
            <person name="Redmond C."/>
            <person name="Thwaite J.E."/>
            <person name="White O."/>
            <person name="Salzberg S.L."/>
            <person name="Thomason B."/>
            <person name="Friedlander A.M."/>
            <person name="Koehler T.M."/>
            <person name="Hanna P.C."/>
            <person name="Kolstoe A.-B."/>
            <person name="Fraser C.M."/>
        </authorList>
    </citation>
    <scope>NUCLEOTIDE SEQUENCE [LARGE SCALE GENOMIC DNA]</scope>
    <source>
        <strain>Ames / isolate Porton</strain>
    </source>
</reference>
<reference key="2">
    <citation type="journal article" date="2009" name="J. Bacteriol.">
        <title>The complete genome sequence of Bacillus anthracis Ames 'Ancestor'.</title>
        <authorList>
            <person name="Ravel J."/>
            <person name="Jiang L."/>
            <person name="Stanley S.T."/>
            <person name="Wilson M.R."/>
            <person name="Decker R.S."/>
            <person name="Read T.D."/>
            <person name="Worsham P."/>
            <person name="Keim P.S."/>
            <person name="Salzberg S.L."/>
            <person name="Fraser-Liggett C.M."/>
            <person name="Rasko D.A."/>
        </authorList>
    </citation>
    <scope>NUCLEOTIDE SEQUENCE [LARGE SCALE GENOMIC DNA]</scope>
    <source>
        <strain>Ames ancestor</strain>
    </source>
</reference>
<reference key="3">
    <citation type="submission" date="2004-01" db="EMBL/GenBank/DDBJ databases">
        <title>Complete genome sequence of Bacillus anthracis Sterne.</title>
        <authorList>
            <person name="Brettin T.S."/>
            <person name="Bruce D."/>
            <person name="Challacombe J.F."/>
            <person name="Gilna P."/>
            <person name="Han C."/>
            <person name="Hill K."/>
            <person name="Hitchcock P."/>
            <person name="Jackson P."/>
            <person name="Keim P."/>
            <person name="Longmire J."/>
            <person name="Lucas S."/>
            <person name="Okinaka R."/>
            <person name="Richardson P."/>
            <person name="Rubin E."/>
            <person name="Tice H."/>
        </authorList>
    </citation>
    <scope>NUCLEOTIDE SEQUENCE [LARGE SCALE GENOMIC DNA]</scope>
    <source>
        <strain>Sterne</strain>
    </source>
</reference>
<protein>
    <recommendedName>
        <fullName evidence="1">Small ribosomal subunit protein bS20</fullName>
    </recommendedName>
    <alternativeName>
        <fullName evidence="3">30S ribosomal protein S20</fullName>
    </alternativeName>
</protein>
<sequence length="85" mass="9342">MANIKSAIKRAKLSEERRAHNASIKSDMRSAVKTVEALVTNNDLENAKEAFKTASKKLDKAARKGLIHQNAAARQKSRLAKQVNA</sequence>
<dbReference type="EMBL" id="AE016879">
    <property type="protein sequence ID" value="AAP28256.1"/>
    <property type="status" value="ALT_INIT"/>
    <property type="molecule type" value="Genomic_DNA"/>
</dbReference>
<dbReference type="EMBL" id="AE017334">
    <property type="protein sequence ID" value="AAT33668.2"/>
    <property type="status" value="ALT_INIT"/>
    <property type="molecule type" value="Genomic_DNA"/>
</dbReference>
<dbReference type="EMBL" id="AE017225">
    <property type="protein sequence ID" value="AAT56520.1"/>
    <property type="status" value="ALT_INIT"/>
    <property type="molecule type" value="Genomic_DNA"/>
</dbReference>
<dbReference type="RefSeq" id="NP_846770.3">
    <property type="nucleotide sequence ID" value="NC_003997.3"/>
</dbReference>
<dbReference type="RefSeq" id="WP_001274011.1">
    <property type="nucleotide sequence ID" value="NZ_WXXJ01000027.1"/>
</dbReference>
<dbReference type="SMR" id="Q81LR4"/>
<dbReference type="STRING" id="261594.GBAA_4547"/>
<dbReference type="DNASU" id="1088277"/>
<dbReference type="GeneID" id="93006778"/>
<dbReference type="KEGG" id="ban:BA_4547"/>
<dbReference type="KEGG" id="bar:GBAA_4547"/>
<dbReference type="KEGG" id="bat:BAS4221"/>
<dbReference type="eggNOG" id="COG0268">
    <property type="taxonomic scope" value="Bacteria"/>
</dbReference>
<dbReference type="HOGENOM" id="CLU_160655_1_0_9"/>
<dbReference type="OMA" id="GVIHKNA"/>
<dbReference type="OrthoDB" id="9808392at2"/>
<dbReference type="Proteomes" id="UP000000427">
    <property type="component" value="Chromosome"/>
</dbReference>
<dbReference type="Proteomes" id="UP000000594">
    <property type="component" value="Chromosome"/>
</dbReference>
<dbReference type="GO" id="GO:0005829">
    <property type="term" value="C:cytosol"/>
    <property type="evidence" value="ECO:0007669"/>
    <property type="project" value="TreeGrafter"/>
</dbReference>
<dbReference type="GO" id="GO:0015935">
    <property type="term" value="C:small ribosomal subunit"/>
    <property type="evidence" value="ECO:0007669"/>
    <property type="project" value="TreeGrafter"/>
</dbReference>
<dbReference type="GO" id="GO:0070181">
    <property type="term" value="F:small ribosomal subunit rRNA binding"/>
    <property type="evidence" value="ECO:0007669"/>
    <property type="project" value="TreeGrafter"/>
</dbReference>
<dbReference type="GO" id="GO:0003735">
    <property type="term" value="F:structural constituent of ribosome"/>
    <property type="evidence" value="ECO:0007669"/>
    <property type="project" value="InterPro"/>
</dbReference>
<dbReference type="GO" id="GO:0006412">
    <property type="term" value="P:translation"/>
    <property type="evidence" value="ECO:0007669"/>
    <property type="project" value="UniProtKB-UniRule"/>
</dbReference>
<dbReference type="FunFam" id="1.20.58.110:FF:000001">
    <property type="entry name" value="30S ribosomal protein S20"/>
    <property type="match status" value="1"/>
</dbReference>
<dbReference type="Gene3D" id="1.20.58.110">
    <property type="entry name" value="Ribosomal protein S20"/>
    <property type="match status" value="1"/>
</dbReference>
<dbReference type="HAMAP" id="MF_00500">
    <property type="entry name" value="Ribosomal_bS20"/>
    <property type="match status" value="1"/>
</dbReference>
<dbReference type="InterPro" id="IPR002583">
    <property type="entry name" value="Ribosomal_bS20"/>
</dbReference>
<dbReference type="InterPro" id="IPR036510">
    <property type="entry name" value="Ribosomal_bS20_sf"/>
</dbReference>
<dbReference type="NCBIfam" id="TIGR00029">
    <property type="entry name" value="S20"/>
    <property type="match status" value="1"/>
</dbReference>
<dbReference type="PANTHER" id="PTHR33398">
    <property type="entry name" value="30S RIBOSOMAL PROTEIN S20"/>
    <property type="match status" value="1"/>
</dbReference>
<dbReference type="PANTHER" id="PTHR33398:SF1">
    <property type="entry name" value="SMALL RIBOSOMAL SUBUNIT PROTEIN BS20C"/>
    <property type="match status" value="1"/>
</dbReference>
<dbReference type="Pfam" id="PF01649">
    <property type="entry name" value="Ribosomal_S20p"/>
    <property type="match status" value="1"/>
</dbReference>
<dbReference type="SUPFAM" id="SSF46992">
    <property type="entry name" value="Ribosomal protein S20"/>
    <property type="match status" value="1"/>
</dbReference>